<reference key="1">
    <citation type="journal article" date="2000" name="Arch. Biochem. Biophys.">
        <title>Molecular cloning and functional expression of contortrostatin, a homodimeric disintegrin from southern copperhead snake venom.</title>
        <authorList>
            <person name="Zhou Q."/>
            <person name="Hu P."/>
            <person name="Ritter M.R."/>
            <person name="Swenson S.D."/>
            <person name="Argounova S."/>
            <person name="Epstein A.L."/>
            <person name="Markland F.S."/>
        </authorList>
    </citation>
    <scope>NUCLEOTIDE SEQUENCE [MRNA]</scope>
    <scope>PROTEIN SEQUENCE OF 419-433</scope>
    <scope>FUNCTION</scope>
    <scope>SUBUNIT</scope>
    <scope>SUBCELLULAR LOCATION</scope>
    <source>
        <tissue>Venom</tissue>
        <tissue>Venom gland</tissue>
    </source>
</reference>
<comment type="function">
    <molecule>Snake venom metalloproteinase</molecule>
    <text evidence="1 7">Impairs hemostasis in the envenomed animal (By similarity). This protein has not been identified in the venom.</text>
</comment>
<comment type="function">
    <molecule>Disintegrin contortrostatin</molecule>
    <text evidence="7">Inhibits ADP-induced platelet aggregation. Binds and inhibits integrins GPIIb/GPIIIa (ITGA2B/ITGB3), alpha-5/beta-1 (ITGA5/ITGB1), alpha-V/beta-3 (ITGAV/ITGB3), and alpha-V/beta-5 (ITGAV/ITGB5). It blocks cancer cell adhesion (tested on human breast cancer cell line MDA-MB-435) to fibronectin and vitronectin and thus prevents invasion of cancer cells.</text>
</comment>
<comment type="cofactor">
    <cofactor evidence="1">
        <name>Zn(2+)</name>
        <dbReference type="ChEBI" id="CHEBI:29105"/>
    </cofactor>
    <text evidence="1">Binds 1 zinc ion per subunit.</text>
</comment>
<comment type="subunit">
    <text evidence="7">Homodimer; disulfide-linked (disintegrin).</text>
</comment>
<comment type="subcellular location">
    <subcellularLocation>
        <location evidence="7">Secreted</location>
    </subcellularLocation>
</comment>
<comment type="tissue specificity">
    <text evidence="9">Expressed by the venom gland.</text>
</comment>
<comment type="miscellaneous">
    <text>The disintegrin belongs to the dimeric disintegrin subfamily.</text>
</comment>
<comment type="similarity">
    <text evidence="8">Belongs to the venom metalloproteinase (M12B) family. P-II subfamily. P-IId sub-subfamily.</text>
</comment>
<sequence length="483" mass="53948">MIQVLLVTLCLAAFPYQGSSIILESGNVNDYEVLYPQKVTALPKGAVQPKYEDTMQYEFKVNGEPVVLHLEKNKGLFSKDYSETHYSSDGRKITTNPPVEDHCYYHGRIQNDADSTASISACNGLKGHFKLQGETYLIEPLKLSDSEAHAVYKYENVEKEDEAPKMCGVTQTNWESDEPIKKASQLNLTPEQQGFPQRYIELVVVADHRMFTKYNGNLNTIRIWVHELVNTMNVFYRPLNIRVSLTDLEVWSDQDLINVQPAAADTLEAFGDWRETVLLNRISHDNAQLLTAIELDGETIGLANRGTMCDPKLSTGIVQDHSAINLWVAVTMAHEMGHNLGISHDGNQCHCDANSCIMSEELREQLSFEFSDCSQNQYQTYLTDHNPQCMLNEPLRTDIVSTPVSGNELLETGEESDFDAPANPCCDAATCKLTTGSQCADGLCCDQCKFMKEGTVCRRARGDDLDDYCNGISAGCPRNPFHA</sequence>
<keyword id="KW-0106">Calcium</keyword>
<keyword id="KW-1217">Cell adhesion impairing toxin</keyword>
<keyword id="KW-0903">Direct protein sequencing</keyword>
<keyword id="KW-1015">Disulfide bond</keyword>
<keyword id="KW-1199">Hemostasis impairing toxin</keyword>
<keyword id="KW-0378">Hydrolase</keyword>
<keyword id="KW-0479">Metal-binding</keyword>
<keyword id="KW-0482">Metalloprotease</keyword>
<keyword id="KW-1201">Platelet aggregation inhibiting toxin</keyword>
<keyword id="KW-0645">Protease</keyword>
<keyword id="KW-0964">Secreted</keyword>
<keyword id="KW-0732">Signal</keyword>
<keyword id="KW-0800">Toxin</keyword>
<keyword id="KW-0862">Zinc</keyword>
<keyword id="KW-0865">Zymogen</keyword>
<protein>
    <recommendedName>
        <fullName>Zinc metalloproteinase/disintegrin</fullName>
    </recommendedName>
    <component>
        <recommendedName>
            <fullName>Snake venom metalloproteinase</fullName>
            <shortName>SVMP</shortName>
            <ecNumber>3.4.24.-</ecNumber>
        </recommendedName>
    </component>
    <component>
        <recommendedName>
            <fullName>Disintegrin contortrostatin</fullName>
        </recommendedName>
    </component>
</protein>
<proteinExistence type="evidence at protein level"/>
<feature type="signal peptide" evidence="3">
    <location>
        <begin position="1"/>
        <end position="20"/>
    </location>
</feature>
<feature type="propeptide" id="PRO_0000028961" evidence="1">
    <location>
        <begin position="21"/>
        <end position="190"/>
    </location>
</feature>
<feature type="chain" id="PRO_0000028962" description="Snake venom metalloproteinase" evidence="1">
    <location>
        <begin position="191"/>
        <end position="394"/>
    </location>
</feature>
<feature type="propeptide" id="PRO_0000028963" evidence="7">
    <location>
        <begin position="395"/>
        <end position="418"/>
    </location>
</feature>
<feature type="chain" id="PRO_0000028964" description="Disintegrin contortrostatin" evidence="7">
    <location>
        <begin position="419"/>
        <end position="483"/>
    </location>
</feature>
<feature type="domain" description="Peptidase M12B" evidence="5">
    <location>
        <begin position="198"/>
        <end position="394"/>
    </location>
</feature>
<feature type="domain" description="Disintegrin" evidence="4">
    <location>
        <begin position="402"/>
        <end position="483"/>
    </location>
</feature>
<feature type="short sequence motif" description="Cell attachment site">
    <location>
        <begin position="461"/>
        <end position="463"/>
    </location>
</feature>
<feature type="active site" evidence="5 6">
    <location>
        <position position="335"/>
    </location>
</feature>
<feature type="binding site" evidence="1">
    <location>
        <position position="201"/>
    </location>
    <ligand>
        <name>Ca(2+)</name>
        <dbReference type="ChEBI" id="CHEBI:29108"/>
    </ligand>
</feature>
<feature type="binding site" evidence="1">
    <location>
        <position position="285"/>
    </location>
    <ligand>
        <name>Ca(2+)</name>
        <dbReference type="ChEBI" id="CHEBI:29108"/>
    </ligand>
</feature>
<feature type="binding site" evidence="1">
    <location>
        <position position="334"/>
    </location>
    <ligand>
        <name>Zn(2+)</name>
        <dbReference type="ChEBI" id="CHEBI:29105"/>
        <note>catalytic</note>
    </ligand>
</feature>
<feature type="binding site" evidence="1">
    <location>
        <position position="338"/>
    </location>
    <ligand>
        <name>Zn(2+)</name>
        <dbReference type="ChEBI" id="CHEBI:29105"/>
        <note>catalytic</note>
    </ligand>
</feature>
<feature type="binding site" evidence="1">
    <location>
        <position position="344"/>
    </location>
    <ligand>
        <name>Zn(2+)</name>
        <dbReference type="ChEBI" id="CHEBI:29105"/>
        <note>catalytic</note>
    </ligand>
</feature>
<feature type="binding site" evidence="1">
    <location>
        <position position="389"/>
    </location>
    <ligand>
        <name>Ca(2+)</name>
        <dbReference type="ChEBI" id="CHEBI:29108"/>
    </ligand>
</feature>
<feature type="binding site" evidence="1">
    <location>
        <position position="392"/>
    </location>
    <ligand>
        <name>Ca(2+)</name>
        <dbReference type="ChEBI" id="CHEBI:29108"/>
    </ligand>
</feature>
<feature type="disulfide bond" evidence="1">
    <location>
        <begin position="309"/>
        <end position="389"/>
    </location>
</feature>
<feature type="disulfide bond" evidence="1">
    <location>
        <begin position="349"/>
        <end position="373"/>
    </location>
</feature>
<feature type="disulfide bond" evidence="1">
    <location>
        <begin position="351"/>
        <end position="356"/>
    </location>
</feature>
<feature type="disulfide bond" evidence="2">
    <location>
        <begin position="425"/>
        <end position="448"/>
    </location>
</feature>
<feature type="disulfide bond" evidence="2">
    <location>
        <begin position="439"/>
        <end position="445"/>
    </location>
</feature>
<feature type="disulfide bond" evidence="2">
    <location>
        <begin position="444"/>
        <end position="469"/>
    </location>
</feature>
<feature type="disulfide bond" evidence="2">
    <location>
        <begin position="457"/>
        <end position="476"/>
    </location>
</feature>
<name>VM2CO_AGKCO</name>
<dbReference type="EC" id="3.4.24.-"/>
<dbReference type="EMBL" id="AF212305">
    <property type="protein sequence ID" value="AAF65171.1"/>
    <property type="molecule type" value="mRNA"/>
</dbReference>
<dbReference type="SMR" id="Q9IAB0"/>
<dbReference type="MEROPS" id="M12.178"/>
<dbReference type="GO" id="GO:0005576">
    <property type="term" value="C:extracellular region"/>
    <property type="evidence" value="ECO:0007669"/>
    <property type="project" value="UniProtKB-SubCell"/>
</dbReference>
<dbReference type="GO" id="GO:0005886">
    <property type="term" value="C:plasma membrane"/>
    <property type="evidence" value="ECO:0007669"/>
    <property type="project" value="TreeGrafter"/>
</dbReference>
<dbReference type="GO" id="GO:0046872">
    <property type="term" value="F:metal ion binding"/>
    <property type="evidence" value="ECO:0007669"/>
    <property type="project" value="UniProtKB-KW"/>
</dbReference>
<dbReference type="GO" id="GO:0004222">
    <property type="term" value="F:metalloendopeptidase activity"/>
    <property type="evidence" value="ECO:0007669"/>
    <property type="project" value="InterPro"/>
</dbReference>
<dbReference type="GO" id="GO:0090729">
    <property type="term" value="F:toxin activity"/>
    <property type="evidence" value="ECO:0007669"/>
    <property type="project" value="UniProtKB-KW"/>
</dbReference>
<dbReference type="GO" id="GO:0006508">
    <property type="term" value="P:proteolysis"/>
    <property type="evidence" value="ECO:0007669"/>
    <property type="project" value="UniProtKB-KW"/>
</dbReference>
<dbReference type="CDD" id="cd04269">
    <property type="entry name" value="ZnMc_adamalysin_II_like"/>
    <property type="match status" value="1"/>
</dbReference>
<dbReference type="FunFam" id="3.40.390.10:FF:000002">
    <property type="entry name" value="Disintegrin and metalloproteinase domain-containing protein 22"/>
    <property type="match status" value="1"/>
</dbReference>
<dbReference type="FunFam" id="4.10.70.10:FF:000005">
    <property type="entry name" value="Zinc metalloproteinase/disintegrin"/>
    <property type="match status" value="1"/>
</dbReference>
<dbReference type="Gene3D" id="3.40.390.10">
    <property type="entry name" value="Collagenase (Catalytic Domain)"/>
    <property type="match status" value="1"/>
</dbReference>
<dbReference type="Gene3D" id="4.10.70.10">
    <property type="entry name" value="Disintegrin domain"/>
    <property type="match status" value="1"/>
</dbReference>
<dbReference type="InterPro" id="IPR018358">
    <property type="entry name" value="Disintegrin_CS"/>
</dbReference>
<dbReference type="InterPro" id="IPR001762">
    <property type="entry name" value="Disintegrin_dom"/>
</dbReference>
<dbReference type="InterPro" id="IPR036436">
    <property type="entry name" value="Disintegrin_dom_sf"/>
</dbReference>
<dbReference type="InterPro" id="IPR024079">
    <property type="entry name" value="MetalloPept_cat_dom_sf"/>
</dbReference>
<dbReference type="InterPro" id="IPR001590">
    <property type="entry name" value="Peptidase_M12B"/>
</dbReference>
<dbReference type="InterPro" id="IPR002870">
    <property type="entry name" value="Peptidase_M12B_N"/>
</dbReference>
<dbReference type="InterPro" id="IPR034027">
    <property type="entry name" value="Reprolysin_adamalysin"/>
</dbReference>
<dbReference type="PANTHER" id="PTHR11905">
    <property type="entry name" value="ADAM A DISINTEGRIN AND METALLOPROTEASE DOMAIN"/>
    <property type="match status" value="1"/>
</dbReference>
<dbReference type="PANTHER" id="PTHR11905:SF32">
    <property type="entry name" value="DISINTEGRIN AND METALLOPROTEINASE DOMAIN-CONTAINING PROTEIN 28"/>
    <property type="match status" value="1"/>
</dbReference>
<dbReference type="Pfam" id="PF00200">
    <property type="entry name" value="Disintegrin"/>
    <property type="match status" value="1"/>
</dbReference>
<dbReference type="Pfam" id="PF01562">
    <property type="entry name" value="Pep_M12B_propep"/>
    <property type="match status" value="1"/>
</dbReference>
<dbReference type="Pfam" id="PF01421">
    <property type="entry name" value="Reprolysin"/>
    <property type="match status" value="1"/>
</dbReference>
<dbReference type="PRINTS" id="PR00289">
    <property type="entry name" value="DISINTEGRIN"/>
</dbReference>
<dbReference type="SMART" id="SM00050">
    <property type="entry name" value="DISIN"/>
    <property type="match status" value="1"/>
</dbReference>
<dbReference type="SUPFAM" id="SSF57552">
    <property type="entry name" value="Blood coagulation inhibitor (disintegrin)"/>
    <property type="match status" value="1"/>
</dbReference>
<dbReference type="SUPFAM" id="SSF55486">
    <property type="entry name" value="Metalloproteases ('zincins'), catalytic domain"/>
    <property type="match status" value="1"/>
</dbReference>
<dbReference type="PROSITE" id="PS50215">
    <property type="entry name" value="ADAM_MEPRO"/>
    <property type="match status" value="1"/>
</dbReference>
<dbReference type="PROSITE" id="PS00427">
    <property type="entry name" value="DISINTEGRIN_1"/>
    <property type="match status" value="1"/>
</dbReference>
<dbReference type="PROSITE" id="PS50214">
    <property type="entry name" value="DISINTEGRIN_2"/>
    <property type="match status" value="1"/>
</dbReference>
<dbReference type="PROSITE" id="PS00142">
    <property type="entry name" value="ZINC_PROTEASE"/>
    <property type="match status" value="1"/>
</dbReference>
<organism evidence="10">
    <name type="scientific">Agkistrodon contortrix contortrix</name>
    <name type="common">Southern copperhead</name>
    <dbReference type="NCBI Taxonomy" id="8713"/>
    <lineage>
        <taxon>Eukaryota</taxon>
        <taxon>Metazoa</taxon>
        <taxon>Chordata</taxon>
        <taxon>Craniata</taxon>
        <taxon>Vertebrata</taxon>
        <taxon>Euteleostomi</taxon>
        <taxon>Lepidosauria</taxon>
        <taxon>Squamata</taxon>
        <taxon>Bifurcata</taxon>
        <taxon>Unidentata</taxon>
        <taxon>Episquamata</taxon>
        <taxon>Toxicofera</taxon>
        <taxon>Serpentes</taxon>
        <taxon>Colubroidea</taxon>
        <taxon>Viperidae</taxon>
        <taxon>Crotalinae</taxon>
        <taxon>Agkistrodon</taxon>
    </lineage>
</organism>
<accession>Q9IAB0</accession>
<evidence type="ECO:0000250" key="1"/>
<evidence type="ECO:0000250" key="2">
    <source>
        <dbReference type="UniProtKB" id="P18619"/>
    </source>
</evidence>
<evidence type="ECO:0000255" key="3"/>
<evidence type="ECO:0000255" key="4">
    <source>
        <dbReference type="PROSITE-ProRule" id="PRU00068"/>
    </source>
</evidence>
<evidence type="ECO:0000255" key="5">
    <source>
        <dbReference type="PROSITE-ProRule" id="PRU00276"/>
    </source>
</evidence>
<evidence type="ECO:0000255" key="6">
    <source>
        <dbReference type="PROSITE-ProRule" id="PRU10095"/>
    </source>
</evidence>
<evidence type="ECO:0000269" key="7">
    <source>
    </source>
</evidence>
<evidence type="ECO:0000305" key="8"/>
<evidence type="ECO:0000305" key="9">
    <source>
    </source>
</evidence>
<evidence type="ECO:0000312" key="10">
    <source>
        <dbReference type="EMBL" id="AAF65171.1"/>
    </source>
</evidence>